<keyword id="KW-0949">S-adenosyl-L-methionine</keyword>
<keyword id="KW-0808">Transferase</keyword>
<name>CMOA_ECOUT</name>
<reference key="1">
    <citation type="journal article" date="2006" name="Proc. Natl. Acad. Sci. U.S.A.">
        <title>Identification of genes subject to positive selection in uropathogenic strains of Escherichia coli: a comparative genomics approach.</title>
        <authorList>
            <person name="Chen S.L."/>
            <person name="Hung C.-S."/>
            <person name="Xu J."/>
            <person name="Reigstad C.S."/>
            <person name="Magrini V."/>
            <person name="Sabo A."/>
            <person name="Blasiar D."/>
            <person name="Bieri T."/>
            <person name="Meyer R.R."/>
            <person name="Ozersky P."/>
            <person name="Armstrong J.R."/>
            <person name="Fulton R.S."/>
            <person name="Latreille J.P."/>
            <person name="Spieth J."/>
            <person name="Hooton T.M."/>
            <person name="Mardis E.R."/>
            <person name="Hultgren S.J."/>
            <person name="Gordon J.I."/>
        </authorList>
    </citation>
    <scope>NUCLEOTIDE SEQUENCE [LARGE SCALE GENOMIC DNA]</scope>
    <source>
        <strain>UTI89 / UPEC</strain>
    </source>
</reference>
<feature type="chain" id="PRO_0000314326" description="Carboxy-S-adenosyl-L-methionine synthase">
    <location>
        <begin position="1"/>
        <end position="247"/>
    </location>
</feature>
<feature type="binding site" evidence="1">
    <location>
        <position position="39"/>
    </location>
    <ligand>
        <name>S-adenosyl-L-methionine</name>
        <dbReference type="ChEBI" id="CHEBI:59789"/>
    </ligand>
</feature>
<feature type="binding site" evidence="1">
    <location>
        <begin position="64"/>
        <end position="66"/>
    </location>
    <ligand>
        <name>S-adenosyl-L-methionine</name>
        <dbReference type="ChEBI" id="CHEBI:59789"/>
    </ligand>
</feature>
<feature type="binding site" evidence="1">
    <location>
        <begin position="89"/>
        <end position="90"/>
    </location>
    <ligand>
        <name>S-adenosyl-L-methionine</name>
        <dbReference type="ChEBI" id="CHEBI:59789"/>
    </ligand>
</feature>
<feature type="binding site" evidence="1">
    <location>
        <begin position="117"/>
        <end position="118"/>
    </location>
    <ligand>
        <name>S-adenosyl-L-methionine</name>
        <dbReference type="ChEBI" id="CHEBI:59789"/>
    </ligand>
</feature>
<feature type="binding site" evidence="1">
    <location>
        <position position="132"/>
    </location>
    <ligand>
        <name>S-adenosyl-L-methionine</name>
        <dbReference type="ChEBI" id="CHEBI:59789"/>
    </ligand>
</feature>
<feature type="binding site" evidence="1">
    <location>
        <position position="199"/>
    </location>
    <ligand>
        <name>S-adenosyl-L-methionine</name>
        <dbReference type="ChEBI" id="CHEBI:59789"/>
    </ligand>
</feature>
<accession>Q1RAR4</accession>
<evidence type="ECO:0000255" key="1">
    <source>
        <dbReference type="HAMAP-Rule" id="MF_01589"/>
    </source>
</evidence>
<proteinExistence type="inferred from homology"/>
<organism>
    <name type="scientific">Escherichia coli (strain UTI89 / UPEC)</name>
    <dbReference type="NCBI Taxonomy" id="364106"/>
    <lineage>
        <taxon>Bacteria</taxon>
        <taxon>Pseudomonadati</taxon>
        <taxon>Pseudomonadota</taxon>
        <taxon>Gammaproteobacteria</taxon>
        <taxon>Enterobacterales</taxon>
        <taxon>Enterobacteriaceae</taxon>
        <taxon>Escherichia</taxon>
    </lineage>
</organism>
<comment type="function">
    <text evidence="1">Catalyzes the conversion of S-adenosyl-L-methionine (SAM) to carboxy-S-adenosyl-L-methionine (Cx-SAM).</text>
</comment>
<comment type="catalytic activity">
    <reaction evidence="1">
        <text>prephenate + S-adenosyl-L-methionine = carboxy-S-adenosyl-L-methionine + 3-phenylpyruvate + H2O</text>
        <dbReference type="Rhea" id="RHEA:51692"/>
        <dbReference type="ChEBI" id="CHEBI:15377"/>
        <dbReference type="ChEBI" id="CHEBI:18005"/>
        <dbReference type="ChEBI" id="CHEBI:29934"/>
        <dbReference type="ChEBI" id="CHEBI:59789"/>
        <dbReference type="ChEBI" id="CHEBI:134278"/>
    </reaction>
</comment>
<comment type="subunit">
    <text evidence="1">Homodimer.</text>
</comment>
<comment type="similarity">
    <text evidence="1">Belongs to the class I-like SAM-binding methyltransferase superfamily. Cx-SAM synthase family.</text>
</comment>
<sequence>MSHRDTLFSAPIARLGDWTFDERVAEVFPDMIQRSVPGYSNIISMIGMLAERFVQPGTQVYDLGCSLGAATLSVRRNIHHDNCKIIAIDNSPAMIERCRRHIDAYKAPTPVDVIEGDIRDIAIENASMVVLNFTLQFLEPSERQALLDKIYQGLNPGGALVLSEKFSFEDAKVGELLFNMHHDFKRANGYSELEISQKRSMLENVMLTDSVETHKARLHKAGFEHSELWFQCFNFGSLVALKAEDAA</sequence>
<gene>
    <name evidence="1" type="primary">cmoA</name>
    <name type="ordered locus">UTI89_C2074</name>
</gene>
<dbReference type="EC" id="2.1.3.-" evidence="1"/>
<dbReference type="EMBL" id="CP000243">
    <property type="protein sequence ID" value="ABE07550.1"/>
    <property type="molecule type" value="Genomic_DNA"/>
</dbReference>
<dbReference type="RefSeq" id="WP_000019588.1">
    <property type="nucleotide sequence ID" value="NZ_CP064825.1"/>
</dbReference>
<dbReference type="SMR" id="Q1RAR4"/>
<dbReference type="GeneID" id="75202724"/>
<dbReference type="KEGG" id="eci:UTI89_C2074"/>
<dbReference type="HOGENOM" id="CLU_078475_0_0_6"/>
<dbReference type="Proteomes" id="UP000001952">
    <property type="component" value="Chromosome"/>
</dbReference>
<dbReference type="GO" id="GO:0016743">
    <property type="term" value="F:carboxyl- or carbamoyltransferase activity"/>
    <property type="evidence" value="ECO:0007669"/>
    <property type="project" value="UniProtKB-UniRule"/>
</dbReference>
<dbReference type="GO" id="GO:1904047">
    <property type="term" value="F:S-adenosyl-L-methionine binding"/>
    <property type="evidence" value="ECO:0007669"/>
    <property type="project" value="UniProtKB-UniRule"/>
</dbReference>
<dbReference type="GO" id="GO:0002098">
    <property type="term" value="P:tRNA wobble uridine modification"/>
    <property type="evidence" value="ECO:0007669"/>
    <property type="project" value="InterPro"/>
</dbReference>
<dbReference type="CDD" id="cd02440">
    <property type="entry name" value="AdoMet_MTases"/>
    <property type="match status" value="1"/>
</dbReference>
<dbReference type="FunFam" id="3.40.50.150:FF:000030">
    <property type="entry name" value="Carboxy-S-adenosyl-L-methionine synthase"/>
    <property type="match status" value="1"/>
</dbReference>
<dbReference type="Gene3D" id="3.40.50.150">
    <property type="entry name" value="Vaccinia Virus protein VP39"/>
    <property type="match status" value="1"/>
</dbReference>
<dbReference type="HAMAP" id="MF_01589">
    <property type="entry name" value="Cx_SAM_synthase"/>
    <property type="match status" value="1"/>
</dbReference>
<dbReference type="InterPro" id="IPR005271">
    <property type="entry name" value="CmoA"/>
</dbReference>
<dbReference type="InterPro" id="IPR041698">
    <property type="entry name" value="Methyltransf_25"/>
</dbReference>
<dbReference type="InterPro" id="IPR029063">
    <property type="entry name" value="SAM-dependent_MTases_sf"/>
</dbReference>
<dbReference type="NCBIfam" id="TIGR00740">
    <property type="entry name" value="carboxy-S-adenosyl-L-methionine synthase CmoA"/>
    <property type="match status" value="1"/>
</dbReference>
<dbReference type="NCBIfam" id="NF011995">
    <property type="entry name" value="PRK15451.1"/>
    <property type="match status" value="1"/>
</dbReference>
<dbReference type="PANTHER" id="PTHR43861:SF2">
    <property type="entry name" value="CARBOXY-S-ADENOSYL-L-METHIONINE SYNTHASE"/>
    <property type="match status" value="1"/>
</dbReference>
<dbReference type="PANTHER" id="PTHR43861">
    <property type="entry name" value="TRANS-ACONITATE 2-METHYLTRANSFERASE-RELATED"/>
    <property type="match status" value="1"/>
</dbReference>
<dbReference type="Pfam" id="PF13649">
    <property type="entry name" value="Methyltransf_25"/>
    <property type="match status" value="1"/>
</dbReference>
<dbReference type="PIRSF" id="PIRSF006325">
    <property type="entry name" value="MeTrfase_bac"/>
    <property type="match status" value="1"/>
</dbReference>
<dbReference type="SUPFAM" id="SSF53335">
    <property type="entry name" value="S-adenosyl-L-methionine-dependent methyltransferases"/>
    <property type="match status" value="1"/>
</dbReference>
<protein>
    <recommendedName>
        <fullName evidence="1">Carboxy-S-adenosyl-L-methionine synthase</fullName>
        <shortName evidence="1">Cx-SAM synthase</shortName>
        <ecNumber evidence="1">2.1.3.-</ecNumber>
    </recommendedName>
</protein>